<keyword id="KW-0217">Developmental protein</keyword>
<keyword id="KW-0221">Differentiation</keyword>
<keyword id="KW-0238">DNA-binding</keyword>
<keyword id="KW-0539">Nucleus</keyword>
<keyword id="KW-1185">Reference proteome</keyword>
<keyword id="KW-0804">Transcription</keyword>
<keyword id="KW-0805">Transcription regulation</keyword>
<dbReference type="EMBL" id="AJ292363">
    <property type="protein sequence ID" value="CAC15548.1"/>
    <property type="molecule type" value="mRNA"/>
</dbReference>
<dbReference type="RefSeq" id="NP_990015.2">
    <property type="nucleotide sequence ID" value="NM_204684.2"/>
</dbReference>
<dbReference type="SMR" id="Q9DEQ9"/>
<dbReference type="FunCoup" id="Q9DEQ9">
    <property type="interactions" value="57"/>
</dbReference>
<dbReference type="STRING" id="9031.ENSGALP00000026522"/>
<dbReference type="GlyGen" id="Q9DEQ9">
    <property type="glycosylation" value="1 site"/>
</dbReference>
<dbReference type="PaxDb" id="9031-ENSGALP00000026522"/>
<dbReference type="GeneID" id="395419"/>
<dbReference type="KEGG" id="gga:395419"/>
<dbReference type="CTD" id="343930"/>
<dbReference type="VEuPathDB" id="HostDB:geneid_395419"/>
<dbReference type="eggNOG" id="KOG4029">
    <property type="taxonomic scope" value="Eukaryota"/>
</dbReference>
<dbReference type="HOGENOM" id="CLU_084234_1_0_1"/>
<dbReference type="InParanoid" id="Q9DEQ9"/>
<dbReference type="OrthoDB" id="10063280at2759"/>
<dbReference type="PhylomeDB" id="Q9DEQ9"/>
<dbReference type="TreeFam" id="TF325707"/>
<dbReference type="PRO" id="PR:Q9DEQ9"/>
<dbReference type="Proteomes" id="UP000000539">
    <property type="component" value="Chromosome 3"/>
</dbReference>
<dbReference type="GO" id="GO:0005634">
    <property type="term" value="C:nucleus"/>
    <property type="evidence" value="ECO:0000318"/>
    <property type="project" value="GO_Central"/>
</dbReference>
<dbReference type="GO" id="GO:0000981">
    <property type="term" value="F:DNA-binding transcription factor activity, RNA polymerase II-specific"/>
    <property type="evidence" value="ECO:0000318"/>
    <property type="project" value="GO_Central"/>
</dbReference>
<dbReference type="GO" id="GO:0046983">
    <property type="term" value="F:protein dimerization activity"/>
    <property type="evidence" value="ECO:0007669"/>
    <property type="project" value="InterPro"/>
</dbReference>
<dbReference type="GO" id="GO:0000978">
    <property type="term" value="F:RNA polymerase II cis-regulatory region sequence-specific DNA binding"/>
    <property type="evidence" value="ECO:0000318"/>
    <property type="project" value="GO_Central"/>
</dbReference>
<dbReference type="GO" id="GO:0030154">
    <property type="term" value="P:cell differentiation"/>
    <property type="evidence" value="ECO:0007669"/>
    <property type="project" value="UniProtKB-KW"/>
</dbReference>
<dbReference type="GO" id="GO:0001707">
    <property type="term" value="P:mesoderm formation"/>
    <property type="evidence" value="ECO:0000318"/>
    <property type="project" value="GO_Central"/>
</dbReference>
<dbReference type="GO" id="GO:0006357">
    <property type="term" value="P:regulation of transcription by RNA polymerase II"/>
    <property type="evidence" value="ECO:0000318"/>
    <property type="project" value="GO_Central"/>
</dbReference>
<dbReference type="CDD" id="cd18939">
    <property type="entry name" value="bHLH_TS_Msgn1"/>
    <property type="match status" value="1"/>
</dbReference>
<dbReference type="FunFam" id="4.10.280.10:FF:000056">
    <property type="entry name" value="mesogenin-1"/>
    <property type="match status" value="1"/>
</dbReference>
<dbReference type="Gene3D" id="4.10.280.10">
    <property type="entry name" value="Helix-loop-helix DNA-binding domain"/>
    <property type="match status" value="1"/>
</dbReference>
<dbReference type="InterPro" id="IPR011598">
    <property type="entry name" value="bHLH_dom"/>
</dbReference>
<dbReference type="InterPro" id="IPR036638">
    <property type="entry name" value="HLH_DNA-bd_sf"/>
</dbReference>
<dbReference type="InterPro" id="IPR040259">
    <property type="entry name" value="Mesogenin/MesP"/>
</dbReference>
<dbReference type="PANTHER" id="PTHR20937">
    <property type="entry name" value="IP14615P"/>
    <property type="match status" value="1"/>
</dbReference>
<dbReference type="PANTHER" id="PTHR20937:SF4">
    <property type="entry name" value="MESOGENIN-1"/>
    <property type="match status" value="1"/>
</dbReference>
<dbReference type="Pfam" id="PF00010">
    <property type="entry name" value="HLH"/>
    <property type="match status" value="1"/>
</dbReference>
<dbReference type="SMART" id="SM00353">
    <property type="entry name" value="HLH"/>
    <property type="match status" value="1"/>
</dbReference>
<dbReference type="SUPFAM" id="SSF47459">
    <property type="entry name" value="HLH, helix-loop-helix DNA-binding domain"/>
    <property type="match status" value="1"/>
</dbReference>
<dbReference type="PROSITE" id="PS50888">
    <property type="entry name" value="BHLH"/>
    <property type="match status" value="1"/>
</dbReference>
<sequence>MEDTLGSEHSVCLSSWDWKNTAGAFELHSVSSPHSLSPTPSFESYSSSPCPAAAETPYSGGGLVGYGLVDFPPAYLPSPGQARLPKGTKVRMSAQRRRKASEREKLRMRTLADALHTLRNYLPPAYSQRGQPLTKIQTLKCTIKYISELTELLNSVKRA</sequence>
<organism>
    <name type="scientific">Gallus gallus</name>
    <name type="common">Chicken</name>
    <dbReference type="NCBI Taxonomy" id="9031"/>
    <lineage>
        <taxon>Eukaryota</taxon>
        <taxon>Metazoa</taxon>
        <taxon>Chordata</taxon>
        <taxon>Craniata</taxon>
        <taxon>Vertebrata</taxon>
        <taxon>Euteleostomi</taxon>
        <taxon>Archelosauria</taxon>
        <taxon>Archosauria</taxon>
        <taxon>Dinosauria</taxon>
        <taxon>Saurischia</taxon>
        <taxon>Theropoda</taxon>
        <taxon>Coelurosauria</taxon>
        <taxon>Aves</taxon>
        <taxon>Neognathae</taxon>
        <taxon>Galloanserae</taxon>
        <taxon>Galliformes</taxon>
        <taxon>Phasianidae</taxon>
        <taxon>Phasianinae</taxon>
        <taxon>Gallus</taxon>
    </lineage>
</organism>
<name>MSGN1_CHICK</name>
<reference key="1">
    <citation type="journal article" date="2000" name="Mech. Dev.">
        <title>Expression of the novel basic-helix-loop-helix transcription factor cMespo in presomitic mesoderm of chicken embryos.</title>
        <authorList>
            <person name="Buchberger A."/>
            <person name="Bonneick S."/>
            <person name="Arnold H.-H."/>
        </authorList>
    </citation>
    <scope>NUCLEOTIDE SEQUENCE [MRNA]</scope>
    <scope>FUNCTION</scope>
    <scope>DEVELOPMENTAL STAGE</scope>
    <source>
        <tissue>Embryo</tissue>
    </source>
</reference>
<protein>
    <recommendedName>
        <fullName>Mesogenin-1</fullName>
    </recommendedName>
    <alternativeName>
        <fullName>Protein cMespo</fullName>
    </alternativeName>
</protein>
<proteinExistence type="evidence at transcript level"/>
<gene>
    <name type="primary">MSGN1</name>
    <name type="synonym">MESPO</name>
</gene>
<feature type="chain" id="PRO_0000330030" description="Mesogenin-1">
    <location>
        <begin position="1"/>
        <end position="159"/>
    </location>
</feature>
<feature type="domain" description="bHLH" evidence="2">
    <location>
        <begin position="95"/>
        <end position="149"/>
    </location>
</feature>
<feature type="region of interest" description="Disordered" evidence="3">
    <location>
        <begin position="79"/>
        <end position="101"/>
    </location>
</feature>
<feature type="compositionally biased region" description="Basic residues" evidence="3">
    <location>
        <begin position="86"/>
        <end position="100"/>
    </location>
</feature>
<evidence type="ECO:0000250" key="1"/>
<evidence type="ECO:0000255" key="2">
    <source>
        <dbReference type="PROSITE-ProRule" id="PRU00981"/>
    </source>
</evidence>
<evidence type="ECO:0000256" key="3">
    <source>
        <dbReference type="SAM" id="MobiDB-lite"/>
    </source>
</evidence>
<evidence type="ECO:0000269" key="4">
    <source>
    </source>
</evidence>
<accession>Q9DEQ9</accession>
<comment type="function">
    <text evidence="1 4">Involved in specifying the paraxial, but not dorsal, mesoderm. May regulate the expression of T-box transcription factors required for mesoderm formation and differentiation (By similarity).</text>
</comment>
<comment type="subcellular location">
    <subcellularLocation>
        <location evidence="2">Nucleus</location>
    </subcellularLocation>
</comment>
<comment type="developmental stage">
    <text evidence="4">Expressed in the presomitic mesoderm preceding the formation of somites. At stage 4 expressed in and around the primitive streak. During subsequent development, expression domain persists, and gradually retracts in parallel to the retracting Hensen's node towards the caudal end. Expression begins to accumulate in gastrulating mesoderm and is later restricted to paraxial mesoderm, prior to the onset of somite formation. No expression is seen within somites, nor in the tailbud mesoderm.</text>
</comment>